<organism>
    <name type="scientific">Methanococcus aeolicus (strain ATCC BAA-1280 / DSM 17508 / OCM 812 / Nankai-3)</name>
    <dbReference type="NCBI Taxonomy" id="419665"/>
    <lineage>
        <taxon>Archaea</taxon>
        <taxon>Methanobacteriati</taxon>
        <taxon>Methanobacteriota</taxon>
        <taxon>Methanomada group</taxon>
        <taxon>Methanococci</taxon>
        <taxon>Methanococcales</taxon>
        <taxon>Methanococcaceae</taxon>
        <taxon>Methanococcus</taxon>
    </lineage>
</organism>
<reference key="1">
    <citation type="submission" date="2007-06" db="EMBL/GenBank/DDBJ databases">
        <title>Complete sequence of Methanococcus aeolicus Nankai-3.</title>
        <authorList>
            <consortium name="US DOE Joint Genome Institute"/>
            <person name="Copeland A."/>
            <person name="Lucas S."/>
            <person name="Lapidus A."/>
            <person name="Barry K."/>
            <person name="Glavina del Rio T."/>
            <person name="Dalin E."/>
            <person name="Tice H."/>
            <person name="Pitluck S."/>
            <person name="Chain P."/>
            <person name="Malfatti S."/>
            <person name="Shin M."/>
            <person name="Vergez L."/>
            <person name="Schmutz J."/>
            <person name="Larimer F."/>
            <person name="Land M."/>
            <person name="Hauser L."/>
            <person name="Kyrpides N."/>
            <person name="Lykidis A."/>
            <person name="Sieprawska-Lupa M."/>
            <person name="Whitman W.B."/>
            <person name="Richardson P."/>
        </authorList>
    </citation>
    <scope>NUCLEOTIDE SEQUENCE [LARGE SCALE GENOMIC DNA]</scope>
    <source>
        <strain>ATCC BAA-1280 / DSM 17508 / OCM 812 / Nankai-3</strain>
    </source>
</reference>
<accession>A6UV46</accession>
<gene>
    <name evidence="1" type="primary">rps12</name>
    <name type="ordered locus">Maeo_0785</name>
</gene>
<comment type="function">
    <text evidence="1">With S4 and S5 plays an important role in translational accuracy. Located at the interface of the 30S and 50S subunits.</text>
</comment>
<comment type="subunit">
    <text evidence="1">Part of the 30S ribosomal subunit.</text>
</comment>
<comment type="similarity">
    <text evidence="1">Belongs to the universal ribosomal protein uS12 family.</text>
</comment>
<dbReference type="EMBL" id="CP000743">
    <property type="protein sequence ID" value="ABR56368.1"/>
    <property type="molecule type" value="Genomic_DNA"/>
</dbReference>
<dbReference type="RefSeq" id="WP_011973500.1">
    <property type="nucleotide sequence ID" value="NC_009635.1"/>
</dbReference>
<dbReference type="SMR" id="A6UV46"/>
<dbReference type="STRING" id="419665.Maeo_0785"/>
<dbReference type="GeneID" id="5327720"/>
<dbReference type="KEGG" id="mae:Maeo_0785"/>
<dbReference type="eggNOG" id="arCOG04255">
    <property type="taxonomic scope" value="Archaea"/>
</dbReference>
<dbReference type="HOGENOM" id="CLU_115574_0_1_2"/>
<dbReference type="OrthoDB" id="45154at2157"/>
<dbReference type="Proteomes" id="UP000001106">
    <property type="component" value="Chromosome"/>
</dbReference>
<dbReference type="GO" id="GO:0015935">
    <property type="term" value="C:small ribosomal subunit"/>
    <property type="evidence" value="ECO:0007669"/>
    <property type="project" value="InterPro"/>
</dbReference>
<dbReference type="GO" id="GO:0019843">
    <property type="term" value="F:rRNA binding"/>
    <property type="evidence" value="ECO:0007669"/>
    <property type="project" value="UniProtKB-UniRule"/>
</dbReference>
<dbReference type="GO" id="GO:0003735">
    <property type="term" value="F:structural constituent of ribosome"/>
    <property type="evidence" value="ECO:0007669"/>
    <property type="project" value="InterPro"/>
</dbReference>
<dbReference type="GO" id="GO:0006412">
    <property type="term" value="P:translation"/>
    <property type="evidence" value="ECO:0007669"/>
    <property type="project" value="UniProtKB-UniRule"/>
</dbReference>
<dbReference type="FunFam" id="2.40.50.140:FF:000007">
    <property type="entry name" value="40S ribosomal protein S23"/>
    <property type="match status" value="1"/>
</dbReference>
<dbReference type="Gene3D" id="2.40.50.140">
    <property type="entry name" value="Nucleic acid-binding proteins"/>
    <property type="match status" value="1"/>
</dbReference>
<dbReference type="HAMAP" id="MF_00403_A">
    <property type="entry name" value="Ribosomal_uS12_A"/>
    <property type="match status" value="1"/>
</dbReference>
<dbReference type="InterPro" id="IPR012340">
    <property type="entry name" value="NA-bd_OB-fold"/>
</dbReference>
<dbReference type="InterPro" id="IPR006032">
    <property type="entry name" value="Ribosomal_uS12"/>
</dbReference>
<dbReference type="InterPro" id="IPR022863">
    <property type="entry name" value="Ribosomal_uS12_arc"/>
</dbReference>
<dbReference type="InterPro" id="IPR005680">
    <property type="entry name" value="Ribosomal_uS12_euk/arc"/>
</dbReference>
<dbReference type="NCBIfam" id="NF003254">
    <property type="entry name" value="PRK04211.1"/>
    <property type="match status" value="1"/>
</dbReference>
<dbReference type="NCBIfam" id="TIGR00982">
    <property type="entry name" value="uS12_E_A"/>
    <property type="match status" value="1"/>
</dbReference>
<dbReference type="PANTHER" id="PTHR11652">
    <property type="entry name" value="30S RIBOSOMAL PROTEIN S12 FAMILY MEMBER"/>
    <property type="match status" value="1"/>
</dbReference>
<dbReference type="Pfam" id="PF00164">
    <property type="entry name" value="Ribosom_S12_S23"/>
    <property type="match status" value="1"/>
</dbReference>
<dbReference type="PIRSF" id="PIRSF002133">
    <property type="entry name" value="Ribosomal_S12/S23"/>
    <property type="match status" value="1"/>
</dbReference>
<dbReference type="SUPFAM" id="SSF50249">
    <property type="entry name" value="Nucleic acid-binding proteins"/>
    <property type="match status" value="1"/>
</dbReference>
<dbReference type="PROSITE" id="PS00055">
    <property type="entry name" value="RIBOSOMAL_S12"/>
    <property type="match status" value="1"/>
</dbReference>
<protein>
    <recommendedName>
        <fullName evidence="1">Small ribosomal subunit protein uS12</fullName>
    </recommendedName>
    <alternativeName>
        <fullName evidence="2">30S ribosomal protein S12</fullName>
    </alternativeName>
</protein>
<proteinExistence type="inferred from homology"/>
<keyword id="KW-0687">Ribonucleoprotein</keyword>
<keyword id="KW-0689">Ribosomal protein</keyword>
<keyword id="KW-0694">RNA-binding</keyword>
<keyword id="KW-0699">rRNA-binding</keyword>
<feature type="chain" id="PRO_1000049792" description="Small ribosomal subunit protein uS12">
    <location>
        <begin position="1"/>
        <end position="147"/>
    </location>
</feature>
<name>RS12_META3</name>
<sequence>MSGSKSPKGEFAGRKIVLKRKESRWHHYKYVNKALKLKEKSDPLGGAPMGRGIVVEKVGLEAKQPNSAIRKCVKVQLIKNGRVVTAFAPGNHAINFIDEHDEVVIEGIGGPSGQAKGDIPGVRFRVVMVGKNSMRELVRGRQEKVRR</sequence>
<evidence type="ECO:0000255" key="1">
    <source>
        <dbReference type="HAMAP-Rule" id="MF_00403"/>
    </source>
</evidence>
<evidence type="ECO:0000305" key="2"/>